<feature type="chain" id="PRO_0000188730" description="1,4-alpha-glucan branching enzyme GlgB">
    <location>
        <begin position="1"/>
        <end position="732"/>
    </location>
</feature>
<feature type="active site" description="Nucleophile" evidence="1">
    <location>
        <position position="412"/>
    </location>
</feature>
<feature type="active site" description="Proton donor" evidence="1">
    <location>
        <position position="465"/>
    </location>
</feature>
<keyword id="KW-0119">Carbohydrate metabolism</keyword>
<keyword id="KW-0320">Glycogen biosynthesis</keyword>
<keyword id="KW-0321">Glycogen metabolism</keyword>
<keyword id="KW-0328">Glycosyltransferase</keyword>
<keyword id="KW-1185">Reference proteome</keyword>
<keyword id="KW-0808">Transferase</keyword>
<organism>
    <name type="scientific">Pseudomonas aeruginosa (strain ATCC 15692 / DSM 22644 / CIP 104116 / JCM 14847 / LMG 12228 / 1C / PRS 101 / PAO1)</name>
    <dbReference type="NCBI Taxonomy" id="208964"/>
    <lineage>
        <taxon>Bacteria</taxon>
        <taxon>Pseudomonadati</taxon>
        <taxon>Pseudomonadota</taxon>
        <taxon>Gammaproteobacteria</taxon>
        <taxon>Pseudomonadales</taxon>
        <taxon>Pseudomonadaceae</taxon>
        <taxon>Pseudomonas</taxon>
    </lineage>
</organism>
<name>GLGB_PSEAE</name>
<proteinExistence type="inferred from homology"/>
<comment type="function">
    <text evidence="1">Catalyzes the formation of the alpha-1,6-glucosidic linkages in glycogen by scission of a 1,4-alpha-linked oligosaccharide from growing alpha-1,4-glucan chains and the subsequent attachment of the oligosaccharide to the alpha-1,6 position.</text>
</comment>
<comment type="catalytic activity">
    <reaction evidence="1">
        <text>Transfers a segment of a (1-&gt;4)-alpha-D-glucan chain to a primary hydroxy group in a similar glucan chain.</text>
        <dbReference type="EC" id="2.4.1.18"/>
    </reaction>
</comment>
<comment type="pathway">
    <text evidence="1">Glycan biosynthesis; glycogen biosynthesis.</text>
</comment>
<comment type="subunit">
    <text evidence="1">Monomer.</text>
</comment>
<comment type="similarity">
    <text evidence="1">Belongs to the glycosyl hydrolase 13 family. GlgB subfamily.</text>
</comment>
<evidence type="ECO:0000255" key="1">
    <source>
        <dbReference type="HAMAP-Rule" id="MF_00685"/>
    </source>
</evidence>
<accession>Q9I1W2</accession>
<dbReference type="EC" id="2.4.1.18" evidence="1"/>
<dbReference type="EMBL" id="AE004091">
    <property type="protein sequence ID" value="AAG05541.1"/>
    <property type="molecule type" value="Genomic_DNA"/>
</dbReference>
<dbReference type="PIR" id="H83376">
    <property type="entry name" value="H83376"/>
</dbReference>
<dbReference type="RefSeq" id="NP_250843.1">
    <property type="nucleotide sequence ID" value="NC_002516.2"/>
</dbReference>
<dbReference type="RefSeq" id="WP_003113646.1">
    <property type="nucleotide sequence ID" value="NZ_QZGE01000014.1"/>
</dbReference>
<dbReference type="SMR" id="Q9I1W2"/>
<dbReference type="FunCoup" id="Q9I1W2">
    <property type="interactions" value="599"/>
</dbReference>
<dbReference type="STRING" id="208964.PA2153"/>
<dbReference type="CAZy" id="CBM48">
    <property type="family name" value="Carbohydrate-Binding Module Family 48"/>
</dbReference>
<dbReference type="CAZy" id="GH13">
    <property type="family name" value="Glycoside Hydrolase Family 13"/>
</dbReference>
<dbReference type="PaxDb" id="208964-PA2153"/>
<dbReference type="GeneID" id="881350"/>
<dbReference type="KEGG" id="pae:PA2153"/>
<dbReference type="PATRIC" id="fig|208964.12.peg.2252"/>
<dbReference type="PseudoCAP" id="PA2153"/>
<dbReference type="HOGENOM" id="CLU_004245_3_2_6"/>
<dbReference type="InParanoid" id="Q9I1W2"/>
<dbReference type="OrthoDB" id="9800174at2"/>
<dbReference type="PhylomeDB" id="Q9I1W2"/>
<dbReference type="BioCyc" id="PAER208964:G1FZ6-2193-MONOMER"/>
<dbReference type="UniPathway" id="UPA00164"/>
<dbReference type="Proteomes" id="UP000002438">
    <property type="component" value="Chromosome"/>
</dbReference>
<dbReference type="GO" id="GO:0005737">
    <property type="term" value="C:cytoplasm"/>
    <property type="evidence" value="ECO:0000318"/>
    <property type="project" value="GO_Central"/>
</dbReference>
<dbReference type="GO" id="GO:0005829">
    <property type="term" value="C:cytosol"/>
    <property type="evidence" value="ECO:0000318"/>
    <property type="project" value="GO_Central"/>
</dbReference>
<dbReference type="GO" id="GO:0003844">
    <property type="term" value="F:1,4-alpha-glucan branching enzyme activity"/>
    <property type="evidence" value="ECO:0000318"/>
    <property type="project" value="GO_Central"/>
</dbReference>
<dbReference type="GO" id="GO:0043169">
    <property type="term" value="F:cation binding"/>
    <property type="evidence" value="ECO:0007669"/>
    <property type="project" value="InterPro"/>
</dbReference>
<dbReference type="GO" id="GO:0004553">
    <property type="term" value="F:hydrolase activity, hydrolyzing O-glycosyl compounds"/>
    <property type="evidence" value="ECO:0007669"/>
    <property type="project" value="InterPro"/>
</dbReference>
<dbReference type="GO" id="GO:0005978">
    <property type="term" value="P:glycogen biosynthetic process"/>
    <property type="evidence" value="ECO:0000318"/>
    <property type="project" value="GO_Central"/>
</dbReference>
<dbReference type="CDD" id="cd11322">
    <property type="entry name" value="AmyAc_Glg_BE"/>
    <property type="match status" value="1"/>
</dbReference>
<dbReference type="CDD" id="cd02855">
    <property type="entry name" value="E_set_GBE_prok_N"/>
    <property type="match status" value="1"/>
</dbReference>
<dbReference type="FunFam" id="2.60.40.10:FF:000169">
    <property type="entry name" value="1,4-alpha-glucan branching enzyme GlgB"/>
    <property type="match status" value="1"/>
</dbReference>
<dbReference type="FunFam" id="2.60.40.1180:FF:000002">
    <property type="entry name" value="1,4-alpha-glucan branching enzyme GlgB"/>
    <property type="match status" value="1"/>
</dbReference>
<dbReference type="FunFam" id="3.20.20.80:FF:000003">
    <property type="entry name" value="1,4-alpha-glucan branching enzyme GlgB"/>
    <property type="match status" value="1"/>
</dbReference>
<dbReference type="Gene3D" id="3.20.20.80">
    <property type="entry name" value="Glycosidases"/>
    <property type="match status" value="1"/>
</dbReference>
<dbReference type="Gene3D" id="2.60.40.1180">
    <property type="entry name" value="Golgi alpha-mannosidase II"/>
    <property type="match status" value="1"/>
</dbReference>
<dbReference type="Gene3D" id="2.60.40.10">
    <property type="entry name" value="Immunoglobulins"/>
    <property type="match status" value="2"/>
</dbReference>
<dbReference type="HAMAP" id="MF_00685">
    <property type="entry name" value="GlgB"/>
    <property type="match status" value="1"/>
</dbReference>
<dbReference type="InterPro" id="IPR006048">
    <property type="entry name" value="A-amylase/branching_C"/>
</dbReference>
<dbReference type="InterPro" id="IPR037439">
    <property type="entry name" value="Branching_enzy"/>
</dbReference>
<dbReference type="InterPro" id="IPR006407">
    <property type="entry name" value="GlgB"/>
</dbReference>
<dbReference type="InterPro" id="IPR054169">
    <property type="entry name" value="GlgB_N"/>
</dbReference>
<dbReference type="InterPro" id="IPR044143">
    <property type="entry name" value="GlgB_N_E_set_prok"/>
</dbReference>
<dbReference type="InterPro" id="IPR006047">
    <property type="entry name" value="Glyco_hydro_13_cat_dom"/>
</dbReference>
<dbReference type="InterPro" id="IPR004193">
    <property type="entry name" value="Glyco_hydro_13_N"/>
</dbReference>
<dbReference type="InterPro" id="IPR013780">
    <property type="entry name" value="Glyco_hydro_b"/>
</dbReference>
<dbReference type="InterPro" id="IPR017853">
    <property type="entry name" value="Glycoside_hydrolase_SF"/>
</dbReference>
<dbReference type="InterPro" id="IPR013783">
    <property type="entry name" value="Ig-like_fold"/>
</dbReference>
<dbReference type="InterPro" id="IPR014756">
    <property type="entry name" value="Ig_E-set"/>
</dbReference>
<dbReference type="NCBIfam" id="TIGR01515">
    <property type="entry name" value="branching_enzym"/>
    <property type="match status" value="1"/>
</dbReference>
<dbReference type="NCBIfam" id="NF003811">
    <property type="entry name" value="PRK05402.1"/>
    <property type="match status" value="1"/>
</dbReference>
<dbReference type="NCBIfam" id="NF008967">
    <property type="entry name" value="PRK12313.1"/>
    <property type="match status" value="1"/>
</dbReference>
<dbReference type="PANTHER" id="PTHR43651">
    <property type="entry name" value="1,4-ALPHA-GLUCAN-BRANCHING ENZYME"/>
    <property type="match status" value="1"/>
</dbReference>
<dbReference type="PANTHER" id="PTHR43651:SF3">
    <property type="entry name" value="1,4-ALPHA-GLUCAN-BRANCHING ENZYME"/>
    <property type="match status" value="1"/>
</dbReference>
<dbReference type="Pfam" id="PF00128">
    <property type="entry name" value="Alpha-amylase"/>
    <property type="match status" value="1"/>
</dbReference>
<dbReference type="Pfam" id="PF02806">
    <property type="entry name" value="Alpha-amylase_C"/>
    <property type="match status" value="1"/>
</dbReference>
<dbReference type="Pfam" id="PF02922">
    <property type="entry name" value="CBM_48"/>
    <property type="match status" value="1"/>
</dbReference>
<dbReference type="Pfam" id="PF22019">
    <property type="entry name" value="GlgB_N"/>
    <property type="match status" value="1"/>
</dbReference>
<dbReference type="PIRSF" id="PIRSF000463">
    <property type="entry name" value="GlgB"/>
    <property type="match status" value="1"/>
</dbReference>
<dbReference type="SMART" id="SM00642">
    <property type="entry name" value="Aamy"/>
    <property type="match status" value="1"/>
</dbReference>
<dbReference type="SUPFAM" id="SSF51445">
    <property type="entry name" value="(Trans)glycosidases"/>
    <property type="match status" value="1"/>
</dbReference>
<dbReference type="SUPFAM" id="SSF81296">
    <property type="entry name" value="E set domains"/>
    <property type="match status" value="2"/>
</dbReference>
<dbReference type="SUPFAM" id="SSF51011">
    <property type="entry name" value="Glycosyl hydrolase domain"/>
    <property type="match status" value="1"/>
</dbReference>
<gene>
    <name evidence="1" type="primary">glgB</name>
    <name type="ordered locus">PA2153</name>
</gene>
<reference key="1">
    <citation type="journal article" date="2000" name="Nature">
        <title>Complete genome sequence of Pseudomonas aeruginosa PAO1, an opportunistic pathogen.</title>
        <authorList>
            <person name="Stover C.K."/>
            <person name="Pham X.-Q.T."/>
            <person name="Erwin A.L."/>
            <person name="Mizoguchi S.D."/>
            <person name="Warrener P."/>
            <person name="Hickey M.J."/>
            <person name="Brinkman F.S.L."/>
            <person name="Hufnagle W.O."/>
            <person name="Kowalik D.J."/>
            <person name="Lagrou M."/>
            <person name="Garber R.L."/>
            <person name="Goltry L."/>
            <person name="Tolentino E."/>
            <person name="Westbrock-Wadman S."/>
            <person name="Yuan Y."/>
            <person name="Brody L.L."/>
            <person name="Coulter S.N."/>
            <person name="Folger K.R."/>
            <person name="Kas A."/>
            <person name="Larbig K."/>
            <person name="Lim R.M."/>
            <person name="Smith K.A."/>
            <person name="Spencer D.H."/>
            <person name="Wong G.K.-S."/>
            <person name="Wu Z."/>
            <person name="Paulsen I.T."/>
            <person name="Reizer J."/>
            <person name="Saier M.H. Jr."/>
            <person name="Hancock R.E.W."/>
            <person name="Lory S."/>
            <person name="Olson M.V."/>
        </authorList>
    </citation>
    <scope>NUCLEOTIDE SEQUENCE [LARGE SCALE GENOMIC DNA]</scope>
    <source>
        <strain>ATCC 15692 / DSM 22644 / CIP 104116 / JCM 14847 / LMG 12228 / 1C / PRS 101 / PAO1</strain>
    </source>
</reference>
<sequence>MSEPMSERERWQLELDKLQRGLQGDPFAFLGPQRDPGGEGGVLRAYLPGAQRVELLDEDGATLAELEQSDPGSGLFQRHLERLPPRYRLRVHWPDGVQESEDPYAFGPLLGELDLYLFAEGNHRQLASCLGAQLTRHEGVEGVRFAVWAPNAVRVSVVGDFNGWDGRRHPMRRRYPSGVWELFVPRLGEGELYKYELQGHDGLLPLKADPLALACETPPGTASKTCAALRHEWRDQDWLARRAERQGYAAPLSIYEVHAGSWRHRDGRPPHWSELAEELIPYVRQLGFTHIELMPVMEHPFGGSWGYQPLGLFAPTARYGTPEDFAAFVDACHQAGIGVILDWVPAHFPTDAHGLGRFDGTALYEYEHPFEGFHQDWDTYIYNLGRSEVHGFMLASALHWLRTYHVDGLRVDAVASMLYRDYSRKEGEWLPNRHGGRENLEAIDFLHHLNQVVASETPGALVIAEESTAWPGVSRPVAEGGLGFSHKWNMGWMHDSLAYIGEDPLHRRYHHHQLTFGLLYAFSEHFILPISHDEVVHGKHSLLDKMPGDRWQKFANLRLYLSFMWSHPGKKLLFMGCEFGQWREWNHDGELDWYLLRYPEHQGVQDLVAALNRLYRELPALHARDGEALGFEWLIGDDQANSVYAWLRHAAGEPSLLAVHNFTPVPRQGYRIGVPQGGDWDVLLNSDAQAFAGSGAGSQGRVSSESCGAHGQAQSLVLDLPPLGTLLLRPAG</sequence>
<protein>
    <recommendedName>
        <fullName evidence="1">1,4-alpha-glucan branching enzyme GlgB</fullName>
        <ecNumber evidence="1">2.4.1.18</ecNumber>
    </recommendedName>
    <alternativeName>
        <fullName evidence="1">1,4-alpha-D-glucan:1,4-alpha-D-glucan 6-glucosyl-transferase</fullName>
    </alternativeName>
    <alternativeName>
        <fullName evidence="1">Alpha-(1-&gt;4)-glucan branching enzyme</fullName>
    </alternativeName>
    <alternativeName>
        <fullName evidence="1">Glycogen branching enzyme</fullName>
        <shortName evidence="1">BE</shortName>
    </alternativeName>
</protein>